<comment type="function">
    <text evidence="1">Involved in heme (porphyrin) scavenging. Binds Fe(2+) and Fe(3+) heme but the largest fraction is Fe(2+) heme. Functions as a high-affinity heme binding protein and probably has a role in relaying heme-iron from cell wall-anchored isd proteins receptors to the probable permease IsdF (By similarity).</text>
</comment>
<comment type="cofactor">
    <cofactor evidence="4">
        <name>heme b</name>
        <dbReference type="ChEBI" id="CHEBI:60344"/>
    </cofactor>
    <text evidence="4">Binds 1 heme b (iron(II)-protoporphyrin IX) group per subunit.</text>
</comment>
<comment type="subcellular location">
    <subcellularLocation>
        <location evidence="2">Cell membrane</location>
        <topology evidence="2">Lipid-anchor</topology>
    </subcellularLocation>
</comment>
<comment type="induction">
    <text evidence="1">Repressed by fur in the presence of iron.</text>
</comment>
<comment type="similarity">
    <text evidence="5">Belongs to the bacterial solute-binding protein 8 family.</text>
</comment>
<organism>
    <name type="scientific">Staphylococcus aureus (strain N315)</name>
    <dbReference type="NCBI Taxonomy" id="158879"/>
    <lineage>
        <taxon>Bacteria</taxon>
        <taxon>Bacillati</taxon>
        <taxon>Bacillota</taxon>
        <taxon>Bacilli</taxon>
        <taxon>Bacillales</taxon>
        <taxon>Staphylococcaceae</taxon>
        <taxon>Staphylococcus</taxon>
    </lineage>
</organism>
<accession>Q7A652</accession>
<feature type="signal peptide" evidence="2">
    <location>
        <begin position="1"/>
        <end position="19"/>
    </location>
</feature>
<feature type="chain" id="PRO_0000326214" description="High-affinity heme uptake system protein IsdE">
    <location>
        <begin position="20"/>
        <end position="292"/>
    </location>
</feature>
<feature type="domain" description="Fe/B12 periplasmic-binding" evidence="3">
    <location>
        <begin position="35"/>
        <end position="291"/>
    </location>
</feature>
<feature type="binding site" evidence="4">
    <location>
        <position position="41"/>
    </location>
    <ligand>
        <name>heme</name>
        <dbReference type="ChEBI" id="CHEBI:30413"/>
    </ligand>
</feature>
<feature type="binding site" evidence="4">
    <location>
        <position position="42"/>
    </location>
    <ligand>
        <name>heme</name>
        <dbReference type="ChEBI" id="CHEBI:30413"/>
    </ligand>
</feature>
<feature type="binding site" evidence="4">
    <location>
        <position position="60"/>
    </location>
    <ligand>
        <name>heme</name>
        <dbReference type="ChEBI" id="CHEBI:30413"/>
    </ligand>
</feature>
<feature type="binding site" evidence="4">
    <location>
        <position position="61"/>
    </location>
    <ligand>
        <name>heme</name>
        <dbReference type="ChEBI" id="CHEBI:30413"/>
    </ligand>
</feature>
<feature type="binding site" description="axial binding residue">
    <location>
        <position position="78"/>
    </location>
    <ligand>
        <name>heme</name>
        <dbReference type="ChEBI" id="CHEBI:30413"/>
    </ligand>
    <ligandPart>
        <name>Fe</name>
        <dbReference type="ChEBI" id="CHEBI:18248"/>
    </ligandPart>
</feature>
<feature type="binding site" description="axial binding residue">
    <location>
        <position position="229"/>
    </location>
    <ligand>
        <name>heme</name>
        <dbReference type="ChEBI" id="CHEBI:30413"/>
    </ligand>
    <ligandPart>
        <name>Fe</name>
        <dbReference type="ChEBI" id="CHEBI:18248"/>
    </ligandPart>
</feature>
<feature type="lipid moiety-binding region" description="N-palmitoyl cysteine" evidence="2">
    <location>
        <position position="20"/>
    </location>
</feature>
<feature type="lipid moiety-binding region" description="S-diacylglycerol cysteine" evidence="2">
    <location>
        <position position="20"/>
    </location>
</feature>
<feature type="strand" evidence="6">
    <location>
        <begin position="36"/>
        <end position="38"/>
    </location>
</feature>
<feature type="helix" evidence="6">
    <location>
        <begin position="41"/>
        <end position="49"/>
    </location>
</feature>
<feature type="helix" evidence="6">
    <location>
        <begin position="66"/>
        <end position="68"/>
    </location>
</feature>
<feature type="helix" evidence="6">
    <location>
        <begin position="82"/>
        <end position="87"/>
    </location>
</feature>
<feature type="strand" evidence="6">
    <location>
        <begin position="91"/>
        <end position="96"/>
    </location>
</feature>
<feature type="helix" evidence="6">
    <location>
        <begin position="97"/>
        <end position="99"/>
    </location>
</feature>
<feature type="helix" evidence="6">
    <location>
        <begin position="100"/>
        <end position="110"/>
    </location>
</feature>
<feature type="strand" evidence="6">
    <location>
        <begin position="115"/>
        <end position="117"/>
    </location>
</feature>
<feature type="helix" evidence="6">
    <location>
        <begin position="122"/>
        <end position="135"/>
    </location>
</feature>
<feature type="helix" evidence="6">
    <location>
        <begin position="139"/>
        <end position="162"/>
    </location>
</feature>
<feature type="strand" evidence="6">
    <location>
        <begin position="168"/>
        <end position="175"/>
    </location>
</feature>
<feature type="strand" evidence="6">
    <location>
        <begin position="178"/>
        <end position="182"/>
    </location>
</feature>
<feature type="helix" evidence="6">
    <location>
        <begin position="187"/>
        <end position="194"/>
    </location>
</feature>
<feature type="strand" evidence="6">
    <location>
        <begin position="198"/>
        <end position="200"/>
    </location>
</feature>
<feature type="strand" evidence="6">
    <location>
        <begin position="205"/>
        <end position="210"/>
    </location>
</feature>
<feature type="turn" evidence="6">
    <location>
        <begin position="211"/>
        <end position="213"/>
    </location>
</feature>
<feature type="strand" evidence="6">
    <location>
        <begin position="222"/>
        <end position="228"/>
    </location>
</feature>
<feature type="helix" evidence="6">
    <location>
        <begin position="232"/>
        <end position="245"/>
    </location>
</feature>
<feature type="helix" evidence="6">
    <location>
        <begin position="247"/>
        <end position="251"/>
    </location>
</feature>
<feature type="helix" evidence="6">
    <location>
        <begin position="253"/>
        <end position="256"/>
    </location>
</feature>
<feature type="strand" evidence="6">
    <location>
        <begin position="260"/>
        <end position="262"/>
    </location>
</feature>
<feature type="turn" evidence="6">
    <location>
        <begin position="265"/>
        <end position="267"/>
    </location>
</feature>
<feature type="helix" evidence="6">
    <location>
        <begin position="276"/>
        <end position="287"/>
    </location>
</feature>
<name>ISDE_STAAN</name>
<gene>
    <name type="primary">isdE</name>
    <name type="synonym">sirF</name>
    <name type="ordered locus">SA0980</name>
</gene>
<protein>
    <recommendedName>
        <fullName>High-affinity heme uptake system protein IsdE</fullName>
    </recommendedName>
    <alternativeName>
        <fullName>Iron-regulated surface determinant protein E</fullName>
    </alternativeName>
    <alternativeName>
        <fullName>Staphylococcal iron-regulated protein F</fullName>
    </alternativeName>
</protein>
<proteinExistence type="evidence at protein level"/>
<reference key="1">
    <citation type="journal article" date="2001" name="Lancet">
        <title>Whole genome sequencing of meticillin-resistant Staphylococcus aureus.</title>
        <authorList>
            <person name="Kuroda M."/>
            <person name="Ohta T."/>
            <person name="Uchiyama I."/>
            <person name="Baba T."/>
            <person name="Yuzawa H."/>
            <person name="Kobayashi I."/>
            <person name="Cui L."/>
            <person name="Oguchi A."/>
            <person name="Aoki K."/>
            <person name="Nagai Y."/>
            <person name="Lian J.-Q."/>
            <person name="Ito T."/>
            <person name="Kanamori M."/>
            <person name="Matsumaru H."/>
            <person name="Maruyama A."/>
            <person name="Murakami H."/>
            <person name="Hosoyama A."/>
            <person name="Mizutani-Ui Y."/>
            <person name="Takahashi N.K."/>
            <person name="Sawano T."/>
            <person name="Inoue R."/>
            <person name="Kaito C."/>
            <person name="Sekimizu K."/>
            <person name="Hirakawa H."/>
            <person name="Kuhara S."/>
            <person name="Goto S."/>
            <person name="Yabuzaki J."/>
            <person name="Kanehisa M."/>
            <person name="Yamashita A."/>
            <person name="Oshima K."/>
            <person name="Furuya K."/>
            <person name="Yoshino C."/>
            <person name="Shiba T."/>
            <person name="Hattori M."/>
            <person name="Ogasawara N."/>
            <person name="Hayashi H."/>
            <person name="Hiramatsu K."/>
        </authorList>
    </citation>
    <scope>NUCLEOTIDE SEQUENCE [LARGE SCALE GENOMIC DNA]</scope>
    <source>
        <strain>N315</strain>
    </source>
</reference>
<reference key="2">
    <citation type="journal article" date="2007" name="J. Biol. Chem.">
        <title>Heme coordination by Staphylococcus aureus IsdE.</title>
        <authorList>
            <person name="Grigg J.C."/>
            <person name="Vermeiren C.L."/>
            <person name="Heinrichs D.E."/>
            <person name="Murphy M.E.P."/>
        </authorList>
    </citation>
    <scope>X-RAY CRYSTALLOGRAPHY (1.95 ANGSTROMS) OF 32-289 IN COMPLEX WITH HEME</scope>
    <scope>COFACTOR</scope>
</reference>
<sequence>MRIIKYLTILVISVVILTSCQSSSSQESTKSGEFRIVPTTVALTMTLDKLDLPIVGKPTSYKTLPNRYKDVPEIGQPMEPNVEAVKKLKPTHVLSVSTIKDEMQPFYKQLNMKGYFYDFDSLKGMQKSITQLGDQFNRKAQAKELNDHLNSVKQKIENKAAKQKKHPKVLILMGVPGSYLVATDKSYIGDLVKIAGGENVIKVKDRQYISSNTENLLNINPDIILRLPHGMPEEVKKMFQKEFKQNDIWKHFKAVKNNHVYDLEEVPFGITANVDADKAMTQLYDLFYKDKK</sequence>
<evidence type="ECO:0000250" key="1"/>
<evidence type="ECO:0000255" key="2">
    <source>
        <dbReference type="PROSITE-ProRule" id="PRU00303"/>
    </source>
</evidence>
<evidence type="ECO:0000255" key="3">
    <source>
        <dbReference type="PROSITE-ProRule" id="PRU00344"/>
    </source>
</evidence>
<evidence type="ECO:0000269" key="4">
    <source>
    </source>
</evidence>
<evidence type="ECO:0000305" key="5"/>
<evidence type="ECO:0007829" key="6">
    <source>
        <dbReference type="PDB" id="2Q8P"/>
    </source>
</evidence>
<keyword id="KW-0002">3D-structure</keyword>
<keyword id="KW-1003">Cell membrane</keyword>
<keyword id="KW-0349">Heme</keyword>
<keyword id="KW-0408">Iron</keyword>
<keyword id="KW-0449">Lipoprotein</keyword>
<keyword id="KW-0472">Membrane</keyword>
<keyword id="KW-0479">Metal-binding</keyword>
<keyword id="KW-0564">Palmitate</keyword>
<keyword id="KW-0732">Signal</keyword>
<keyword id="KW-0813">Transport</keyword>
<dbReference type="EMBL" id="BA000018">
    <property type="protein sequence ID" value="BAB42229.1"/>
    <property type="molecule type" value="Genomic_DNA"/>
</dbReference>
<dbReference type="PIR" id="A89884">
    <property type="entry name" value="A89884"/>
</dbReference>
<dbReference type="RefSeq" id="WP_001220199.1">
    <property type="nucleotide sequence ID" value="NC_002745.2"/>
</dbReference>
<dbReference type="PDB" id="2Q8P">
    <property type="method" value="X-ray"/>
    <property type="resolution" value="1.95 A"/>
    <property type="chains" value="A=32-289"/>
</dbReference>
<dbReference type="PDB" id="2Q8Q">
    <property type="method" value="X-ray"/>
    <property type="resolution" value="2.15 A"/>
    <property type="chains" value="A=32-289"/>
</dbReference>
<dbReference type="PDBsum" id="2Q8P"/>
<dbReference type="PDBsum" id="2Q8Q"/>
<dbReference type="SMR" id="Q7A652"/>
<dbReference type="TCDB" id="3.A.1.14.17">
    <property type="family name" value="the atp-binding cassette (abc) superfamily"/>
</dbReference>
<dbReference type="EnsemblBacteria" id="BAB42229">
    <property type="protein sequence ID" value="BAB42229"/>
    <property type="gene ID" value="BAB42229"/>
</dbReference>
<dbReference type="KEGG" id="sau:SA0980"/>
<dbReference type="HOGENOM" id="CLU_038034_2_3_9"/>
<dbReference type="EvolutionaryTrace" id="Q7A652"/>
<dbReference type="GO" id="GO:0005886">
    <property type="term" value="C:plasma membrane"/>
    <property type="evidence" value="ECO:0007669"/>
    <property type="project" value="UniProtKB-SubCell"/>
</dbReference>
<dbReference type="GO" id="GO:0020037">
    <property type="term" value="F:heme binding"/>
    <property type="evidence" value="ECO:0007669"/>
    <property type="project" value="InterPro"/>
</dbReference>
<dbReference type="GO" id="GO:0046872">
    <property type="term" value="F:metal ion binding"/>
    <property type="evidence" value="ECO:0007669"/>
    <property type="project" value="UniProtKB-KW"/>
</dbReference>
<dbReference type="GO" id="GO:0071281">
    <property type="term" value="P:cellular response to iron ion"/>
    <property type="evidence" value="ECO:0007669"/>
    <property type="project" value="TreeGrafter"/>
</dbReference>
<dbReference type="GO" id="GO:0015886">
    <property type="term" value="P:heme transport"/>
    <property type="evidence" value="ECO:0007669"/>
    <property type="project" value="InterPro"/>
</dbReference>
<dbReference type="FunFam" id="3.40.50.1980:FF:000022">
    <property type="entry name" value="Heme ABC transporter substrate-binding protein IsdE"/>
    <property type="match status" value="1"/>
</dbReference>
<dbReference type="FunFam" id="3.40.50.1980:FF:000031">
    <property type="entry name" value="High-affinity heme uptake system protein IsdE"/>
    <property type="match status" value="1"/>
</dbReference>
<dbReference type="Gene3D" id="3.40.50.1980">
    <property type="entry name" value="Nitrogenase molybdenum iron protein domain"/>
    <property type="match status" value="2"/>
</dbReference>
<dbReference type="InterPro" id="IPR050902">
    <property type="entry name" value="ABC_Transporter_SBP"/>
</dbReference>
<dbReference type="InterPro" id="IPR019957">
    <property type="entry name" value="ABC_transptr_haem-bd_IsdE"/>
</dbReference>
<dbReference type="InterPro" id="IPR002491">
    <property type="entry name" value="ABC_transptr_periplasmic_BD"/>
</dbReference>
<dbReference type="NCBIfam" id="TIGR03659">
    <property type="entry name" value="IsdE"/>
    <property type="match status" value="1"/>
</dbReference>
<dbReference type="PANTHER" id="PTHR30535:SF36">
    <property type="entry name" value="HIGH-AFFINITY HEME UPTAKE SYSTEM PROTEIN ISDE"/>
    <property type="match status" value="1"/>
</dbReference>
<dbReference type="PANTHER" id="PTHR30535">
    <property type="entry name" value="VITAMIN B12-BINDING PROTEIN"/>
    <property type="match status" value="1"/>
</dbReference>
<dbReference type="Pfam" id="PF01497">
    <property type="entry name" value="Peripla_BP_2"/>
    <property type="match status" value="1"/>
</dbReference>
<dbReference type="SUPFAM" id="SSF53807">
    <property type="entry name" value="Helical backbone' metal receptor"/>
    <property type="match status" value="1"/>
</dbReference>
<dbReference type="PROSITE" id="PS50983">
    <property type="entry name" value="FE_B12_PBP"/>
    <property type="match status" value="1"/>
</dbReference>
<dbReference type="PROSITE" id="PS51257">
    <property type="entry name" value="PROKAR_LIPOPROTEIN"/>
    <property type="match status" value="1"/>
</dbReference>